<proteinExistence type="inferred from homology"/>
<name>SKP1_ARTBC</name>
<feature type="chain" id="PRO_0000397258" description="E3 ubiquitin ligase complex SCF subunit sconC">
    <location>
        <begin position="1"/>
        <end position="164"/>
    </location>
</feature>
<feature type="region of interest" description="Interaction with the F-box domain of F-box proteins" evidence="1">
    <location>
        <begin position="106"/>
        <end position="164"/>
    </location>
</feature>
<evidence type="ECO:0000250" key="1"/>
<evidence type="ECO:0000305" key="2"/>
<gene>
    <name type="primary">sconC</name>
    <name type="synonym">skpA</name>
    <name type="ORF">ARB_06761</name>
</gene>
<accession>D4ARL8</accession>
<dbReference type="EMBL" id="ABSU01000006">
    <property type="protein sequence ID" value="EFE34361.1"/>
    <property type="molecule type" value="Genomic_DNA"/>
</dbReference>
<dbReference type="RefSeq" id="XP_003015001.1">
    <property type="nucleotide sequence ID" value="XM_003014955.1"/>
</dbReference>
<dbReference type="SMR" id="D4ARL8"/>
<dbReference type="STRING" id="663331.D4ARL8"/>
<dbReference type="GeneID" id="9520724"/>
<dbReference type="KEGG" id="abe:ARB_06761"/>
<dbReference type="eggNOG" id="KOG1724">
    <property type="taxonomic scope" value="Eukaryota"/>
</dbReference>
<dbReference type="HOGENOM" id="CLU_059252_4_0_1"/>
<dbReference type="OMA" id="DKYTASM"/>
<dbReference type="OrthoDB" id="2342932at2759"/>
<dbReference type="UniPathway" id="UPA00143"/>
<dbReference type="Proteomes" id="UP000008866">
    <property type="component" value="Unassembled WGS sequence"/>
</dbReference>
<dbReference type="GO" id="GO:0016567">
    <property type="term" value="P:protein ubiquitination"/>
    <property type="evidence" value="ECO:0007669"/>
    <property type="project" value="UniProtKB-UniPathway"/>
</dbReference>
<dbReference type="GO" id="GO:0006511">
    <property type="term" value="P:ubiquitin-dependent protein catabolic process"/>
    <property type="evidence" value="ECO:0007669"/>
    <property type="project" value="InterPro"/>
</dbReference>
<dbReference type="CDD" id="cd18322">
    <property type="entry name" value="BTB_POZ_SKP1"/>
    <property type="match status" value="1"/>
</dbReference>
<dbReference type="FunFam" id="3.30.710.10:FF:000026">
    <property type="entry name" value="E3 ubiquitin ligase complex SCF subunit"/>
    <property type="match status" value="1"/>
</dbReference>
<dbReference type="Gene3D" id="3.30.710.10">
    <property type="entry name" value="Potassium Channel Kv1.1, Chain A"/>
    <property type="match status" value="1"/>
</dbReference>
<dbReference type="InterPro" id="IPR016897">
    <property type="entry name" value="SKP1"/>
</dbReference>
<dbReference type="InterPro" id="IPR001232">
    <property type="entry name" value="SKP1-like"/>
</dbReference>
<dbReference type="InterPro" id="IPR036296">
    <property type="entry name" value="SKP1-like_dim_sf"/>
</dbReference>
<dbReference type="InterPro" id="IPR011333">
    <property type="entry name" value="SKP1/BTB/POZ_sf"/>
</dbReference>
<dbReference type="InterPro" id="IPR016072">
    <property type="entry name" value="Skp1_comp_dimer"/>
</dbReference>
<dbReference type="InterPro" id="IPR016073">
    <property type="entry name" value="Skp1_comp_POZ"/>
</dbReference>
<dbReference type="PANTHER" id="PTHR11165">
    <property type="entry name" value="SKP1"/>
    <property type="match status" value="1"/>
</dbReference>
<dbReference type="Pfam" id="PF01466">
    <property type="entry name" value="Skp1"/>
    <property type="match status" value="1"/>
</dbReference>
<dbReference type="Pfam" id="PF03931">
    <property type="entry name" value="Skp1_POZ"/>
    <property type="match status" value="1"/>
</dbReference>
<dbReference type="PIRSF" id="PIRSF028729">
    <property type="entry name" value="E3_ubiquit_lig_SCF_Skp"/>
    <property type="match status" value="1"/>
</dbReference>
<dbReference type="SMART" id="SM00512">
    <property type="entry name" value="Skp1"/>
    <property type="match status" value="1"/>
</dbReference>
<dbReference type="SUPFAM" id="SSF54695">
    <property type="entry name" value="POZ domain"/>
    <property type="match status" value="1"/>
</dbReference>
<dbReference type="SUPFAM" id="SSF81382">
    <property type="entry name" value="Skp1 dimerisation domain-like"/>
    <property type="match status" value="1"/>
</dbReference>
<reference key="1">
    <citation type="journal article" date="2011" name="Genome Biol.">
        <title>Comparative and functional genomics provide insights into the pathogenicity of dermatophytic fungi.</title>
        <authorList>
            <person name="Burmester A."/>
            <person name="Shelest E."/>
            <person name="Gloeckner G."/>
            <person name="Heddergott C."/>
            <person name="Schindler S."/>
            <person name="Staib P."/>
            <person name="Heidel A."/>
            <person name="Felder M."/>
            <person name="Petzold A."/>
            <person name="Szafranski K."/>
            <person name="Feuermann M."/>
            <person name="Pedruzzi I."/>
            <person name="Priebe S."/>
            <person name="Groth M."/>
            <person name="Winkler R."/>
            <person name="Li W."/>
            <person name="Kniemeyer O."/>
            <person name="Schroeckh V."/>
            <person name="Hertweck C."/>
            <person name="Hube B."/>
            <person name="White T.C."/>
            <person name="Platzer M."/>
            <person name="Guthke R."/>
            <person name="Heitman J."/>
            <person name="Woestemeyer J."/>
            <person name="Zipfel P.F."/>
            <person name="Monod M."/>
            <person name="Brakhage A.A."/>
        </authorList>
    </citation>
    <scope>NUCLEOTIDE SEQUENCE [LARGE SCALE GENOMIC DNA]</scope>
    <source>
        <strain>ATCC MYA-4681 / CBS 112371</strain>
    </source>
</reference>
<protein>
    <recommendedName>
        <fullName>E3 ubiquitin ligase complex SCF subunit sconC</fullName>
    </recommendedName>
    <alternativeName>
        <fullName>Sulfur controller C</fullName>
    </alternativeName>
    <alternativeName>
        <fullName>Sulfur metabolite repression control protein C</fullName>
    </alternativeName>
</protein>
<sequence>MASTATNKITLTSSDGVEVTIERQVAERSILIKNMLEDLGDSGEPIPIPNVNESVLKKVIEWCEHHKGDPPSTGDDDVDSRRKTTDIDEWDQKFMQVDQEMLFEIILAANYLDIKALLDVGCKTVANMIKGKSPEEIRKTFNIQNDFTPEEEDQIRRENEWAEE</sequence>
<comment type="function">
    <text evidence="1">Essential component of the SCF (SKP1-CUL1-F-box protein) E3 ubiquitin ligase complexes, which mediate the ubiquitination and subsequent proteasomal degradation of target proteins. Controls sulfur metabolite repression, probably by mediating the inactivation or degradation of the metR transcription factor (By similarity).</text>
</comment>
<comment type="pathway">
    <text>Protein modification; protein ubiquitination.</text>
</comment>
<comment type="subunit">
    <text evidence="1">Component of the SCF (SKP1-CUL1-F-box protein) E3 ubiquitin ligase complexes.</text>
</comment>
<comment type="similarity">
    <text evidence="2">Belongs to the SKP1 family.</text>
</comment>
<organism>
    <name type="scientific">Arthroderma benhamiae (strain ATCC MYA-4681 / CBS 112371)</name>
    <name type="common">Trichophyton mentagrophytes</name>
    <dbReference type="NCBI Taxonomy" id="663331"/>
    <lineage>
        <taxon>Eukaryota</taxon>
        <taxon>Fungi</taxon>
        <taxon>Dikarya</taxon>
        <taxon>Ascomycota</taxon>
        <taxon>Pezizomycotina</taxon>
        <taxon>Eurotiomycetes</taxon>
        <taxon>Eurotiomycetidae</taxon>
        <taxon>Onygenales</taxon>
        <taxon>Arthrodermataceae</taxon>
        <taxon>Trichophyton</taxon>
    </lineage>
</organism>
<keyword id="KW-1185">Reference proteome</keyword>
<keyword id="KW-0833">Ubl conjugation pathway</keyword>